<protein>
    <recommendedName>
        <fullName>Basic membrane protein B</fullName>
    </recommendedName>
    <alternativeName>
        <fullName evidence="3">Probable substrate-binding protein BmpB</fullName>
    </alternativeName>
</protein>
<name>BMPB_BORBU</name>
<feature type="signal peptide" evidence="4">
    <location>
        <begin position="1"/>
        <end position="14"/>
    </location>
</feature>
<feature type="chain" id="PRO_0000018000" description="Basic membrane protein B">
    <location>
        <begin position="15"/>
        <end position="341"/>
    </location>
</feature>
<feature type="lipid moiety-binding region" description="N-palmitoyl cysteine" evidence="4">
    <location>
        <position position="15"/>
    </location>
</feature>
<feature type="lipid moiety-binding region" description="S-diacylglycerol cysteine" evidence="4">
    <location>
        <position position="15"/>
    </location>
</feature>
<feature type="sequence variant" description="In strain: 212.">
    <original>S</original>
    <variation>A</variation>
    <location>
        <position position="45"/>
    </location>
</feature>
<feature type="sequence variant" description="In strain: B31.">
    <original>A</original>
    <variation>T</variation>
    <location>
        <position position="233"/>
    </location>
</feature>
<feature type="sequence variant" description="In strain: B31.">
    <original>V</original>
    <variation>I</variation>
    <location>
        <position position="318"/>
    </location>
</feature>
<feature type="sequence conflict" description="In Ref. 3; CAA57237." evidence="4" ref="3">
    <original>R</original>
    <variation>P</variation>
    <location>
        <position position="53"/>
    </location>
</feature>
<feature type="sequence conflict" description="In Ref. 3; CAA57237." evidence="4" ref="3">
    <original>S</original>
    <variation>P</variation>
    <location>
        <position position="67"/>
    </location>
</feature>
<sequence>MRIVIFIFGILLTSCFSRNGIESSSKKIKISMLVDGVLDDKSFNSSANEALLRLKKDFPENIEEVFSCAISGVYSSYVSDLDNLKRNGSDLIWLVGYMLTDASLLVSSENPKISYGIIDPIYGDDVQIPENLIAVVFRVEQGAFLAGYIAAKKSFSGKIGFIGGMKGNIVDAFRYGYESGAKYANKDIEIISEYSNSFSDVDIGRTIASKMYSKGIDVIHFAAGLAGIGVIEAAKNLGDGYYVIGADQDQSYLAPKNFITSVIKNIGDALYLITGEYIKNNNVWEGGKVVQMGLRDGVIGLPNANEFEYIKVLERKIVNKEIIVPCNQEEYEIFIKQILKL</sequence>
<comment type="function">
    <text evidence="5">May be part of an ABC-type nucleoside uptake system involved in the purine salvage pathway.</text>
</comment>
<comment type="subunit">
    <text evidence="1">Monomer.</text>
</comment>
<comment type="subcellular location">
    <subcellularLocation>
        <location evidence="4">Cell inner membrane</location>
        <topology evidence="4">Lipid-anchor</topology>
        <orientation evidence="2">Periplasmic side</orientation>
    </subcellularLocation>
</comment>
<comment type="similarity">
    <text evidence="4">Belongs to the BMP lipoprotein family.</text>
</comment>
<dbReference type="EMBL" id="L24194">
    <property type="protein sequence ID" value="AAA72407.1"/>
    <property type="molecule type" value="Genomic_DNA"/>
</dbReference>
<dbReference type="EMBL" id="U49938">
    <property type="protein sequence ID" value="AAC44713.1"/>
    <property type="molecule type" value="Genomic_DNA"/>
</dbReference>
<dbReference type="EMBL" id="X81517">
    <property type="protein sequence ID" value="CAA57237.1"/>
    <property type="molecule type" value="Genomic_DNA"/>
</dbReference>
<dbReference type="EMBL" id="AE000783">
    <property type="protein sequence ID" value="AAC66758.1"/>
    <property type="molecule type" value="Genomic_DNA"/>
</dbReference>
<dbReference type="EMBL" id="L35050">
    <property type="protein sequence ID" value="AAC41402.1"/>
    <property type="molecule type" value="Genomic_DNA"/>
</dbReference>
<dbReference type="PIR" id="E70147">
    <property type="entry name" value="E70147"/>
</dbReference>
<dbReference type="RefSeq" id="NP_212516.1">
    <property type="nucleotide sequence ID" value="NC_001318.1"/>
</dbReference>
<dbReference type="RefSeq" id="WP_010889740.1">
    <property type="nucleotide sequence ID" value="NC_001318.1"/>
</dbReference>
<dbReference type="SMR" id="Q45011"/>
<dbReference type="STRING" id="224326.BB_0382"/>
<dbReference type="PaxDb" id="224326-BB_0382"/>
<dbReference type="EnsemblBacteria" id="AAC66758">
    <property type="protein sequence ID" value="AAC66758"/>
    <property type="gene ID" value="BB_0382"/>
</dbReference>
<dbReference type="KEGG" id="bbu:BB_0382"/>
<dbReference type="PATRIC" id="fig|224326.49.peg.777"/>
<dbReference type="HOGENOM" id="CLU_038813_0_2_12"/>
<dbReference type="OrthoDB" id="9769871at2"/>
<dbReference type="Proteomes" id="UP000001807">
    <property type="component" value="Chromosome"/>
</dbReference>
<dbReference type="GO" id="GO:0005886">
    <property type="term" value="C:plasma membrane"/>
    <property type="evidence" value="ECO:0007669"/>
    <property type="project" value="UniProtKB-SubCell"/>
</dbReference>
<dbReference type="CDD" id="cd06354">
    <property type="entry name" value="PBP1_PrnA-like"/>
    <property type="match status" value="1"/>
</dbReference>
<dbReference type="Gene3D" id="3.40.50.2300">
    <property type="match status" value="2"/>
</dbReference>
<dbReference type="InterPro" id="IPR050957">
    <property type="entry name" value="BMP_lipoprotein"/>
</dbReference>
<dbReference type="InterPro" id="IPR028082">
    <property type="entry name" value="Peripla_BP_I"/>
</dbReference>
<dbReference type="InterPro" id="IPR003760">
    <property type="entry name" value="PnrA-like"/>
</dbReference>
<dbReference type="PANTHER" id="PTHR34296:SF2">
    <property type="entry name" value="ABC TRANSPORTER GUANOSINE-BINDING PROTEIN NUPN"/>
    <property type="match status" value="1"/>
</dbReference>
<dbReference type="PANTHER" id="PTHR34296">
    <property type="entry name" value="TRANSCRIPTIONAL ACTIVATOR PROTEIN MED"/>
    <property type="match status" value="1"/>
</dbReference>
<dbReference type="Pfam" id="PF02608">
    <property type="entry name" value="Bmp"/>
    <property type="match status" value="1"/>
</dbReference>
<dbReference type="SUPFAM" id="SSF53822">
    <property type="entry name" value="Periplasmic binding protein-like I"/>
    <property type="match status" value="1"/>
</dbReference>
<dbReference type="PROSITE" id="PS51257">
    <property type="entry name" value="PROKAR_LIPOPROTEIN"/>
    <property type="match status" value="1"/>
</dbReference>
<proteinExistence type="evidence at protein level"/>
<gene>
    <name type="primary">bmpB</name>
    <name type="ordered locus">BB_0382</name>
</gene>
<keyword id="KW-0997">Cell inner membrane</keyword>
<keyword id="KW-1003">Cell membrane</keyword>
<keyword id="KW-0449">Lipoprotein</keyword>
<keyword id="KW-0472">Membrane</keyword>
<keyword id="KW-0564">Palmitate</keyword>
<keyword id="KW-1185">Reference proteome</keyword>
<keyword id="KW-0732">Signal</keyword>
<keyword id="KW-0813">Transport</keyword>
<reference key="1">
    <citation type="journal article" date="1994" name="FEMS Microbiol. Lett.">
        <title>Nucleotide sequence and analysis of the gene in Borrelia burgdorferi encoding the immunogenic P39 antigen.</title>
        <authorList>
            <person name="Simpson W.J."/>
            <person name="Cieplak W."/>
            <person name="Schrumpf M.E."/>
            <person name="Barbour A.G."/>
            <person name="Schwan T.G."/>
        </authorList>
    </citation>
    <scope>NUCLEOTIDE SEQUENCE [GENOMIC DNA]</scope>
    <source>
        <strain>Sh-2-82</strain>
    </source>
</reference>
<reference key="2">
    <citation type="journal article" date="1996" name="FEMS Microbiol. Lett.">
        <title>Identification and mapping of a chromosomal gene cluster of Borrelia burgdorferi containing genes expressed in vivo.</title>
        <authorList>
            <person name="Aron L."/>
            <person name="Toth C."/>
            <person name="Godfrey H.P."/>
            <person name="Cabello F.C."/>
        </authorList>
    </citation>
    <scope>NUCLEOTIDE SEQUENCE [GENOMIC DNA]</scope>
    <source>
        <strain>ATCC 53899 / 297</strain>
    </source>
</reference>
<reference key="3">
    <citation type="journal article" date="1997" name="J. Clin. Microbiol.">
        <title>Heterogeneity of BmpA (P39) among European isolates of Borrelia burgdorferi sensu lato and influence of interspecies variability on serodiagnosis.</title>
        <authorList>
            <person name="Roessler D."/>
            <person name="Hauser U."/>
            <person name="Wilske B."/>
        </authorList>
    </citation>
    <scope>NUCLEOTIDE SEQUENCE [GENOMIC DNA]</scope>
    <source>
        <strain>ATCC 35210 / DSM 4680 / CIP 102532 / B31</strain>
    </source>
</reference>
<reference key="4">
    <citation type="journal article" date="1997" name="Nature">
        <title>Genomic sequence of a Lyme disease spirochaete, Borrelia burgdorferi.</title>
        <authorList>
            <person name="Fraser C.M."/>
            <person name="Casjens S."/>
            <person name="Huang W.M."/>
            <person name="Sutton G.G."/>
            <person name="Clayton R.A."/>
            <person name="Lathigra R."/>
            <person name="White O."/>
            <person name="Ketchum K.A."/>
            <person name="Dodson R.J."/>
            <person name="Hickey E.K."/>
            <person name="Gwinn M.L."/>
            <person name="Dougherty B.A."/>
            <person name="Tomb J.-F."/>
            <person name="Fleischmann R.D."/>
            <person name="Richardson D.L."/>
            <person name="Peterson J.D."/>
            <person name="Kerlavage A.R."/>
            <person name="Quackenbush J."/>
            <person name="Salzberg S.L."/>
            <person name="Hanson M."/>
            <person name="van Vugt R."/>
            <person name="Palmer N."/>
            <person name="Adams M.D."/>
            <person name="Gocayne J.D."/>
            <person name="Weidman J.F."/>
            <person name="Utterback T.R."/>
            <person name="Watthey L."/>
            <person name="McDonald L.A."/>
            <person name="Artiach P."/>
            <person name="Bowman C."/>
            <person name="Garland S.A."/>
            <person name="Fujii C."/>
            <person name="Cotton M.D."/>
            <person name="Horst K."/>
            <person name="Roberts K.M."/>
            <person name="Hatch B."/>
            <person name="Smith H.O."/>
            <person name="Venter J.C."/>
        </authorList>
    </citation>
    <scope>NUCLEOTIDE SEQUENCE [LARGE SCALE GENOMIC DNA]</scope>
    <source>
        <strain>ATCC 35210 / DSM 4680 / CIP 102532 / B31</strain>
    </source>
</reference>
<reference key="5">
    <citation type="journal article" date="1994" name="Microbiology">
        <title>Conservation of gene arrangement and an unusual organization of rRNA genes in the linear chromosomes of the Lyme disease spirochaetes Borrelia burgdorferi, B. garinii and B. afzelii.</title>
        <authorList>
            <person name="Ojaimi C."/>
            <person name="Davidson B.E."/>
            <person name="Saint-Girons I."/>
            <person name="Old I.G."/>
        </authorList>
    </citation>
    <scope>NUCLEOTIDE SEQUENCE [GENOMIC DNA] OF 1-179</scope>
    <source>
        <strain>212</strain>
    </source>
</reference>
<reference key="6">
    <citation type="journal article" date="2017" name="J. Bacteriol.">
        <title>Comprehensive Spatial Analysis of the Borrelia burgdorferi Lipoproteome Reveals a Compartmentalization Bias toward the Bacterial Surface.</title>
        <authorList>
            <person name="Dowdell A.S."/>
            <person name="Murphy M.D."/>
            <person name="Azodi C."/>
            <person name="Swanson S.K."/>
            <person name="Florens L."/>
            <person name="Chen S."/>
            <person name="Zueckert W.R."/>
        </authorList>
    </citation>
    <scope>SUBCELLULAR LOCATION</scope>
    <scope>IDENTIFICATION BY MASS SPECTROMETRY</scope>
    <source>
        <strain>ATCC 35210 / DSM 4680 / CIP 102532 / B31</strain>
    </source>
</reference>
<reference key="7">
    <citation type="journal article" date="2020" name="Infect. Immun.">
        <title>Structural and Biomolecular Analyses of Borrelia burgdorferi BmpD Reveal a Substrate-Binding Protein of an ABC-Type Nucleoside Transporter Family.</title>
        <authorList>
            <person name="Cuellar J."/>
            <person name="Astrand M."/>
            <person name="Elovaara H."/>
            <person name="Pietikainen A."/>
            <person name="Siren S."/>
            <person name="Liljeblad A."/>
            <person name="Guedez G."/>
            <person name="Salminen T.A."/>
            <person name="Hytonen J."/>
        </authorList>
    </citation>
    <scope>POSSIBLE FUNCTION</scope>
    <source>
        <strain>ATCC 35210 / DSM 4680 / CIP 102532 / B31</strain>
    </source>
</reference>
<organism>
    <name type="scientific">Borreliella burgdorferi (strain ATCC 35210 / DSM 4680 / CIP 102532 / B31)</name>
    <name type="common">Borrelia burgdorferi</name>
    <dbReference type="NCBI Taxonomy" id="224326"/>
    <lineage>
        <taxon>Bacteria</taxon>
        <taxon>Pseudomonadati</taxon>
        <taxon>Spirochaetota</taxon>
        <taxon>Spirochaetia</taxon>
        <taxon>Spirochaetales</taxon>
        <taxon>Borreliaceae</taxon>
        <taxon>Borreliella</taxon>
    </lineage>
</organism>
<accession>Q45011</accession>
<accession>O07954</accession>
<accession>O31317</accession>
<accession>O50168</accession>
<accession>Q44858</accession>
<evidence type="ECO:0000250" key="1">
    <source>
        <dbReference type="UniProtKB" id="P0CL55"/>
    </source>
</evidence>
<evidence type="ECO:0000269" key="2">
    <source>
    </source>
</evidence>
<evidence type="ECO:0000303" key="3">
    <source>
    </source>
</evidence>
<evidence type="ECO:0000305" key="4"/>
<evidence type="ECO:0000305" key="5">
    <source>
    </source>
</evidence>